<protein>
    <recommendedName>
        <fullName evidence="2">Photosystem II D2 protein</fullName>
        <shortName evidence="2">PSII D2 protein</shortName>
        <ecNumber evidence="2">1.10.3.9</ecNumber>
    </recommendedName>
    <alternativeName>
        <fullName evidence="2">Photosystem Q(A) protein</fullName>
    </alternativeName>
</protein>
<comment type="function">
    <text evidence="2">Photosystem II (PSII) is a light-driven water:plastoquinone oxidoreductase that uses light energy to abstract electrons from H(2)O, generating O(2) and a proton gradient subsequently used for ATP formation. It consists of a core antenna complex that captures photons, and an electron transfer chain that converts photonic excitation into a charge separation. The D1/D2 (PsbA/PsbD) reaction center heterodimer binds P680, the primary electron donor of PSII as well as several subsequent electron acceptors. D2 is needed for assembly of a stable PSII complex.</text>
</comment>
<comment type="catalytic activity">
    <reaction evidence="2">
        <text>2 a plastoquinone + 4 hnu + 2 H2O = 2 a plastoquinol + O2</text>
        <dbReference type="Rhea" id="RHEA:36359"/>
        <dbReference type="Rhea" id="RHEA-COMP:9561"/>
        <dbReference type="Rhea" id="RHEA-COMP:9562"/>
        <dbReference type="ChEBI" id="CHEBI:15377"/>
        <dbReference type="ChEBI" id="CHEBI:15379"/>
        <dbReference type="ChEBI" id="CHEBI:17757"/>
        <dbReference type="ChEBI" id="CHEBI:30212"/>
        <dbReference type="ChEBI" id="CHEBI:62192"/>
        <dbReference type="EC" id="1.10.3.9"/>
    </reaction>
</comment>
<comment type="cofactor">
    <text evidence="2">The D1/D2 heterodimer binds P680, chlorophylls that are the primary electron donor of PSII, and subsequent electron acceptors. It shares a non-heme iron and each subunit binds pheophytin, quinone, additional chlorophylls, carotenoids and lipids. There is also a Cl(-1) ion associated with D1 and D2, which is required for oxygen evolution. The PSII complex binds additional chlorophylls, carotenoids and specific lipids.</text>
</comment>
<comment type="subunit">
    <text evidence="2">PSII is composed of 1 copy each of membrane proteins PsbA, PsbB, PsbC, PsbD, PsbE, PsbF, PsbH, PsbI, PsbJ, PsbK, PsbL, PsbM, PsbT, PsbX, PsbY, PsbZ, Psb30/Ycf12, at least 3 peripheral proteins of the oxygen-evolving complex and a large number of cofactors. It forms dimeric complexes.</text>
</comment>
<comment type="subcellular location">
    <subcellularLocation>
        <location evidence="3">Plastid membrane</location>
        <topology evidence="3">Multi-pass membrane protein</topology>
    </subcellularLocation>
</comment>
<comment type="miscellaneous">
    <text evidence="2">2 of the reaction center chlorophylls (ChlD1 and ChlD2) are entirely coordinated by water.</text>
</comment>
<comment type="similarity">
    <text evidence="2">Belongs to the reaction center PufL/M/PsbA/D family.</text>
</comment>
<comment type="caution">
    <text evidence="3">Young tissue from this organism is photosynthetic and contains some thylakoids, although the photosynthetic activity does not exceed the light compensation point.</text>
</comment>
<accession>A8W3B9</accession>
<name>PSBD_CUSEX</name>
<sequence length="353" mass="39687">MTIALGKLTKEEKDLFDTMDDWLRRDRFIFVGWSGLLLFPCAYFALGGWFTGTTFVTSWYTHGLASSYLEGCNFLTAAVSTPANSLAHSLLFLWGPEAQGDFTRWCQLGGLWTFVALHGAFGLIGFMLRQFELARSVQLRPYNAIAFSAPIAVFVSVFFIYPLGQSGWFFAPSFGVAAIFRFIRFFQGFHNWTLNPFHMMGVAGVLGAALLCAIHGATVENTLFEDGDGANTFRAFNPTQSEETYSMVTANRFWSQIFGVAFSNKRWLHFFMLFVPVTGLWMSALGVVGLALNLRAYDFVSQEIRAAEDPEFETFYTKNILLNEGIRAWMAAQDQPHENLIFPEEVLPRGNAL</sequence>
<proteinExistence type="inferred from homology"/>
<gene>
    <name evidence="2" type="primary">psbD</name>
</gene>
<evidence type="ECO:0000250" key="1">
    <source>
        <dbReference type="UniProtKB" id="P56761"/>
    </source>
</evidence>
<evidence type="ECO:0000255" key="2">
    <source>
        <dbReference type="HAMAP-Rule" id="MF_01383"/>
    </source>
</evidence>
<evidence type="ECO:0000305" key="3"/>
<reference key="1">
    <citation type="journal article" date="2007" name="BMC Plant Biol.">
        <title>Complete plastid genome sequences suggest strong selection for retention of photosynthetic genes in the parasitic plant genus Cuscuta.</title>
        <authorList>
            <person name="McNeal J.R."/>
            <person name="Kuehl J.V."/>
            <person name="Boore J.L."/>
            <person name="dePamphilis C.W."/>
        </authorList>
    </citation>
    <scope>NUCLEOTIDE SEQUENCE [LARGE SCALE GENOMIC DNA]</scope>
</reference>
<keyword id="KW-0007">Acetylation</keyword>
<keyword id="KW-0148">Chlorophyll</keyword>
<keyword id="KW-0157">Chromophore</keyword>
<keyword id="KW-0249">Electron transport</keyword>
<keyword id="KW-0408">Iron</keyword>
<keyword id="KW-0460">Magnesium</keyword>
<keyword id="KW-0472">Membrane</keyword>
<keyword id="KW-0479">Metal-binding</keyword>
<keyword id="KW-0560">Oxidoreductase</keyword>
<keyword id="KW-0597">Phosphoprotein</keyword>
<keyword id="KW-0602">Photosynthesis</keyword>
<keyword id="KW-0604">Photosystem II</keyword>
<keyword id="KW-0934">Plastid</keyword>
<keyword id="KW-0812">Transmembrane</keyword>
<keyword id="KW-1133">Transmembrane helix</keyword>
<keyword id="KW-0813">Transport</keyword>
<feature type="initiator methionine" description="Removed" evidence="1">
    <location>
        <position position="1"/>
    </location>
</feature>
<feature type="chain" id="PRO_0000359641" description="Photosystem II D2 protein">
    <location>
        <begin position="2"/>
        <end position="353"/>
    </location>
</feature>
<feature type="transmembrane region" description="Helical" evidence="2">
    <location>
        <begin position="41"/>
        <end position="61"/>
    </location>
</feature>
<feature type="transmembrane region" description="Helical" evidence="2">
    <location>
        <begin position="125"/>
        <end position="141"/>
    </location>
</feature>
<feature type="transmembrane region" description="Helical" evidence="2">
    <location>
        <begin position="153"/>
        <end position="166"/>
    </location>
</feature>
<feature type="transmembrane region" description="Helical" evidence="2">
    <location>
        <begin position="208"/>
        <end position="228"/>
    </location>
</feature>
<feature type="transmembrane region" description="Helical" evidence="2">
    <location>
        <begin position="279"/>
        <end position="295"/>
    </location>
</feature>
<feature type="binding site" description="axial binding residue" evidence="2">
    <location>
        <position position="118"/>
    </location>
    <ligand>
        <name>chlorophyll a</name>
        <dbReference type="ChEBI" id="CHEBI:58416"/>
        <label>ChlzD2</label>
    </ligand>
    <ligandPart>
        <name>Mg</name>
        <dbReference type="ChEBI" id="CHEBI:25107"/>
    </ligandPart>
</feature>
<feature type="binding site" evidence="2">
    <location>
        <position position="130"/>
    </location>
    <ligand>
        <name>pheophytin a</name>
        <dbReference type="ChEBI" id="CHEBI:136840"/>
        <label>D2</label>
    </ligand>
</feature>
<feature type="binding site" evidence="2">
    <location>
        <position position="143"/>
    </location>
    <ligand>
        <name>pheophytin a</name>
        <dbReference type="ChEBI" id="CHEBI:136840"/>
        <label>D2</label>
    </ligand>
</feature>
<feature type="binding site" description="axial binding residue" evidence="2">
    <location>
        <position position="198"/>
    </location>
    <ligand>
        <name>chlorophyll a</name>
        <dbReference type="ChEBI" id="CHEBI:58416"/>
        <label>PD2</label>
    </ligand>
    <ligandPart>
        <name>Mg</name>
        <dbReference type="ChEBI" id="CHEBI:25107"/>
    </ligandPart>
</feature>
<feature type="binding site" evidence="2">
    <location>
        <position position="215"/>
    </location>
    <ligand>
        <name>a plastoquinone</name>
        <dbReference type="ChEBI" id="CHEBI:17757"/>
        <label>Q(A)</label>
    </ligand>
</feature>
<feature type="binding site" evidence="2">
    <location>
        <position position="215"/>
    </location>
    <ligand>
        <name>Fe cation</name>
        <dbReference type="ChEBI" id="CHEBI:24875"/>
        <note>ligand shared with heterodimeric partner</note>
    </ligand>
</feature>
<feature type="binding site" evidence="2">
    <location>
        <position position="262"/>
    </location>
    <ligand>
        <name>a plastoquinone</name>
        <dbReference type="ChEBI" id="CHEBI:17757"/>
        <label>Q(A)</label>
    </ligand>
</feature>
<feature type="binding site" evidence="2">
    <location>
        <position position="269"/>
    </location>
    <ligand>
        <name>Fe cation</name>
        <dbReference type="ChEBI" id="CHEBI:24875"/>
        <note>ligand shared with heterodimeric partner</note>
    </ligand>
</feature>
<feature type="modified residue" description="N-acetylthreonine" evidence="1">
    <location>
        <position position="2"/>
    </location>
</feature>
<feature type="modified residue" description="Phosphothreonine" evidence="1">
    <location>
        <position position="2"/>
    </location>
</feature>
<geneLocation type="plastid"/>
<dbReference type="EC" id="1.10.3.9" evidence="2"/>
<dbReference type="EMBL" id="EU189132">
    <property type="protein sequence ID" value="ABW83690.1"/>
    <property type="molecule type" value="Genomic_DNA"/>
</dbReference>
<dbReference type="RefSeq" id="YP_001542526.1">
    <property type="nucleotide sequence ID" value="NC_009963.1"/>
</dbReference>
<dbReference type="SMR" id="A8W3B9"/>
<dbReference type="GeneID" id="5729684"/>
<dbReference type="GO" id="GO:0009535">
    <property type="term" value="C:chloroplast thylakoid membrane"/>
    <property type="evidence" value="ECO:0007669"/>
    <property type="project" value="TreeGrafter"/>
</dbReference>
<dbReference type="GO" id="GO:0009523">
    <property type="term" value="C:photosystem II"/>
    <property type="evidence" value="ECO:0007669"/>
    <property type="project" value="UniProtKB-KW"/>
</dbReference>
<dbReference type="GO" id="GO:0016168">
    <property type="term" value="F:chlorophyll binding"/>
    <property type="evidence" value="ECO:0007669"/>
    <property type="project" value="UniProtKB-UniRule"/>
</dbReference>
<dbReference type="GO" id="GO:0045156">
    <property type="term" value="F:electron transporter, transferring electrons within the cyclic electron transport pathway of photosynthesis activity"/>
    <property type="evidence" value="ECO:0007669"/>
    <property type="project" value="InterPro"/>
</dbReference>
<dbReference type="GO" id="GO:0005506">
    <property type="term" value="F:iron ion binding"/>
    <property type="evidence" value="ECO:0007669"/>
    <property type="project" value="UniProtKB-UniRule"/>
</dbReference>
<dbReference type="GO" id="GO:0010242">
    <property type="term" value="F:oxygen evolving activity"/>
    <property type="evidence" value="ECO:0007669"/>
    <property type="project" value="UniProtKB-EC"/>
</dbReference>
<dbReference type="GO" id="GO:0009772">
    <property type="term" value="P:photosynthetic electron transport in photosystem II"/>
    <property type="evidence" value="ECO:0007669"/>
    <property type="project" value="InterPro"/>
</dbReference>
<dbReference type="CDD" id="cd09288">
    <property type="entry name" value="Photosystem-II_D2"/>
    <property type="match status" value="1"/>
</dbReference>
<dbReference type="FunFam" id="1.20.85.10:FF:000001">
    <property type="entry name" value="photosystem II D2 protein-like"/>
    <property type="match status" value="1"/>
</dbReference>
<dbReference type="Gene3D" id="1.20.85.10">
    <property type="entry name" value="Photosystem II protein D1-like"/>
    <property type="match status" value="1"/>
</dbReference>
<dbReference type="HAMAP" id="MF_01383">
    <property type="entry name" value="PSII_PsbD_D2"/>
    <property type="match status" value="1"/>
</dbReference>
<dbReference type="InterPro" id="IPR055266">
    <property type="entry name" value="D1/D2"/>
</dbReference>
<dbReference type="InterPro" id="IPR036854">
    <property type="entry name" value="Photo_II_D1/D2_sf"/>
</dbReference>
<dbReference type="InterPro" id="IPR000484">
    <property type="entry name" value="Photo_RC_L/M"/>
</dbReference>
<dbReference type="InterPro" id="IPR055265">
    <property type="entry name" value="Photo_RC_L/M_CS"/>
</dbReference>
<dbReference type="InterPro" id="IPR005868">
    <property type="entry name" value="PSII_PsbD/D2"/>
</dbReference>
<dbReference type="NCBIfam" id="TIGR01152">
    <property type="entry name" value="psbD"/>
    <property type="match status" value="1"/>
</dbReference>
<dbReference type="PANTHER" id="PTHR33149:SF57">
    <property type="entry name" value="PHOTOSYSTEM II D2 PROTEIN"/>
    <property type="match status" value="1"/>
</dbReference>
<dbReference type="PANTHER" id="PTHR33149">
    <property type="entry name" value="PHOTOSYSTEM II PROTEIN D1"/>
    <property type="match status" value="1"/>
</dbReference>
<dbReference type="Pfam" id="PF00124">
    <property type="entry name" value="Photo_RC"/>
    <property type="match status" value="1"/>
</dbReference>
<dbReference type="PRINTS" id="PR00256">
    <property type="entry name" value="REACTNCENTRE"/>
</dbReference>
<dbReference type="SUPFAM" id="SSF81483">
    <property type="entry name" value="Bacterial photosystem II reaction centre, L and M subunits"/>
    <property type="match status" value="1"/>
</dbReference>
<dbReference type="PROSITE" id="PS00244">
    <property type="entry name" value="REACTION_CENTER"/>
    <property type="match status" value="1"/>
</dbReference>
<organism>
    <name type="scientific">Cuscuta exaltata</name>
    <name type="common">Tall dodder</name>
    <dbReference type="NCBI Taxonomy" id="476139"/>
    <lineage>
        <taxon>Eukaryota</taxon>
        <taxon>Viridiplantae</taxon>
        <taxon>Streptophyta</taxon>
        <taxon>Embryophyta</taxon>
        <taxon>Tracheophyta</taxon>
        <taxon>Spermatophyta</taxon>
        <taxon>Magnoliopsida</taxon>
        <taxon>eudicotyledons</taxon>
        <taxon>Gunneridae</taxon>
        <taxon>Pentapetalae</taxon>
        <taxon>asterids</taxon>
        <taxon>lamiids</taxon>
        <taxon>Solanales</taxon>
        <taxon>Convolvulaceae</taxon>
        <taxon>Cuscuteae</taxon>
        <taxon>Cuscuta</taxon>
        <taxon>Cuscuta subgen. Monogynella</taxon>
    </lineage>
</organism>